<proteinExistence type="evidence at protein level"/>
<organism>
    <name type="scientific">Salvia pomifera</name>
    <name type="common">Apple sage</name>
    <dbReference type="NCBI Taxonomy" id="396869"/>
    <lineage>
        <taxon>Eukaryota</taxon>
        <taxon>Viridiplantae</taxon>
        <taxon>Streptophyta</taxon>
        <taxon>Embryophyta</taxon>
        <taxon>Tracheophyta</taxon>
        <taxon>Spermatophyta</taxon>
        <taxon>Magnoliopsida</taxon>
        <taxon>eudicotyledons</taxon>
        <taxon>Gunneridae</taxon>
        <taxon>Pentapetalae</taxon>
        <taxon>asterids</taxon>
        <taxon>lamiids</taxon>
        <taxon>Lamiales</taxon>
        <taxon>Lamiaceae</taxon>
        <taxon>Nepetoideae</taxon>
        <taxon>Mentheae</taxon>
        <taxon>Salviinae</taxon>
        <taxon>Salvia</taxon>
        <taxon>Salvia incertae sedis</taxon>
    </lineage>
</organism>
<feature type="transit peptide" description="Chloroplast" evidence="3">
    <location>
        <begin position="1" status="less than"/>
        <end position="28"/>
    </location>
</feature>
<feature type="chain" id="PRO_0000455077" description="Sabinene synthase 1, chloroplastic">
    <location>
        <begin position="29"/>
        <end position="581"/>
    </location>
</feature>
<feature type="short sequence motif" description="DDXXD motif" evidence="6">
    <location>
        <begin position="334"/>
        <end position="338"/>
    </location>
</feature>
<feature type="binding site" evidence="2">
    <location>
        <position position="297"/>
    </location>
    <ligand>
        <name>(2E)-geranyl diphosphate</name>
        <dbReference type="ChEBI" id="CHEBI:58057"/>
    </ligand>
</feature>
<feature type="binding site" evidence="2">
    <location>
        <position position="334"/>
    </location>
    <ligand>
        <name>(2E)-geranyl diphosphate</name>
        <dbReference type="ChEBI" id="CHEBI:58057"/>
    </ligand>
</feature>
<feature type="binding site" evidence="2">
    <location>
        <position position="334"/>
    </location>
    <ligand>
        <name>Mg(2+)</name>
        <dbReference type="ChEBI" id="CHEBI:18420"/>
        <label>1</label>
    </ligand>
</feature>
<feature type="binding site" evidence="2">
    <location>
        <position position="334"/>
    </location>
    <ligand>
        <name>Mg(2+)</name>
        <dbReference type="ChEBI" id="CHEBI:18420"/>
        <label>2</label>
    </ligand>
</feature>
<feature type="binding site" evidence="2">
    <location>
        <position position="338"/>
    </location>
    <ligand>
        <name>(2E)-geranyl diphosphate</name>
        <dbReference type="ChEBI" id="CHEBI:58057"/>
    </ligand>
</feature>
<feature type="binding site" evidence="2">
    <location>
        <position position="338"/>
    </location>
    <ligand>
        <name>Mg(2+)</name>
        <dbReference type="ChEBI" id="CHEBI:18420"/>
        <label>1</label>
    </ligand>
</feature>
<feature type="binding site" evidence="2">
    <location>
        <position position="338"/>
    </location>
    <ligand>
        <name>Mg(2+)</name>
        <dbReference type="ChEBI" id="CHEBI:18420"/>
        <label>2</label>
    </ligand>
</feature>
<feature type="binding site" evidence="2">
    <location>
        <position position="475"/>
    </location>
    <ligand>
        <name>(2E)-geranyl diphosphate</name>
        <dbReference type="ChEBI" id="CHEBI:58057"/>
    </ligand>
</feature>
<feature type="binding site" evidence="2">
    <location>
        <position position="478"/>
    </location>
    <ligand>
        <name>(2E)-geranyl diphosphate</name>
        <dbReference type="ChEBI" id="CHEBI:58057"/>
    </ligand>
</feature>
<feature type="binding site" evidence="2">
    <location>
        <position position="478"/>
    </location>
    <ligand>
        <name>Mg(2+)</name>
        <dbReference type="ChEBI" id="CHEBI:18420"/>
        <label>3</label>
    </ligand>
</feature>
<feature type="binding site" evidence="2">
    <location>
        <position position="482"/>
    </location>
    <ligand>
        <name>Mg(2+)</name>
        <dbReference type="ChEBI" id="CHEBI:18420"/>
        <label>3</label>
    </ligand>
</feature>
<feature type="binding site" evidence="2">
    <location>
        <position position="486"/>
    </location>
    <ligand>
        <name>Mg(2+)</name>
        <dbReference type="ChEBI" id="CHEBI:18420"/>
        <label>3</label>
    </ligand>
</feature>
<feature type="site" description="Confers catalytic properties (activation of water molecule and hydroxylation of the alpha-terpinyl cation)" evidence="4">
    <location>
        <position position="327"/>
    </location>
</feature>
<feature type="mutagenesis site" description="Slightly reduced ability to produce sabinene, but acquired ability to produce limonene, 1,8-cineole and alpha-terpineol from (2E)-geranyl diphosphate. Slightly reduced ability to produce sabinene, but acquired ability to produce limonene, 1,8-cineole and alpha-terpineol from (2E)-geranyl diphosphate; when associated with A-328. Slightly reduced ability to produce sabinene, lost ability to produce myrcene, but acquired ability to produce alpha-terpineol from (2E)-geranyl diphosphate; when associated with A-328 and G-436." evidence="4">
    <original>I</original>
    <variation>N</variation>
    <location>
        <position position="327"/>
    </location>
</feature>
<feature type="mutagenesis site" description="Slightly reduced ability to produce sabinene, but acquired ability to produce limonene, 1,8-cineole and alpha-terpineol from (2E)-geranyl diphosphate; when associated with N-327. Slightly reduced ability to produce sabinene, lost ability to produce myrcene, but acquired ability to produce alpha-terpineol from (2E)-geranyl diphosphate; when associated with N-327 and G-436." evidence="4">
    <original>T</original>
    <variation>A</variation>
    <location>
        <position position="328"/>
    </location>
</feature>
<feature type="mutagenesis site" description="Slightly reduced ability to produce sabinene, lost ability to produce myrcene, but acquired ability to produce alpha-terpineol from (2E)-geranyl diphosphate; when associated with N-327 and A-328." evidence="4">
    <original>S</original>
    <variation>G</variation>
    <location>
        <position position="436"/>
    </location>
</feature>
<feature type="non-terminal residue" evidence="7">
    <location>
        <position position="1"/>
    </location>
</feature>
<dbReference type="EC" id="4.2.3.-" evidence="4"/>
<dbReference type="EC" id="4.2.3.15" evidence="4"/>
<dbReference type="EMBL" id="DQ785794">
    <property type="protein sequence ID" value="ABH07678.1"/>
    <property type="molecule type" value="mRNA"/>
</dbReference>
<dbReference type="SMR" id="A6XH06"/>
<dbReference type="BRENDA" id="4.2.3.110">
    <property type="organism ID" value="15442"/>
</dbReference>
<dbReference type="UniPathway" id="UPA00213"/>
<dbReference type="GO" id="GO:0009507">
    <property type="term" value="C:chloroplast"/>
    <property type="evidence" value="ECO:0007669"/>
    <property type="project" value="UniProtKB-SubCell"/>
</dbReference>
<dbReference type="GO" id="GO:0000287">
    <property type="term" value="F:magnesium ion binding"/>
    <property type="evidence" value="ECO:0007669"/>
    <property type="project" value="InterPro"/>
</dbReference>
<dbReference type="GO" id="GO:0080015">
    <property type="term" value="F:sabinene synthase activity"/>
    <property type="evidence" value="ECO:0000314"/>
    <property type="project" value="UniProtKB"/>
</dbReference>
<dbReference type="GO" id="GO:0016102">
    <property type="term" value="P:diterpenoid biosynthetic process"/>
    <property type="evidence" value="ECO:0007669"/>
    <property type="project" value="InterPro"/>
</dbReference>
<dbReference type="GO" id="GO:0010597">
    <property type="term" value="P:green leaf volatile biosynthetic process"/>
    <property type="evidence" value="ECO:0000314"/>
    <property type="project" value="UniProtKB"/>
</dbReference>
<dbReference type="GO" id="GO:0016099">
    <property type="term" value="P:monoterpenoid biosynthetic process"/>
    <property type="evidence" value="ECO:0000314"/>
    <property type="project" value="UniProtKB"/>
</dbReference>
<dbReference type="CDD" id="cd00684">
    <property type="entry name" value="Terpene_cyclase_plant_C1"/>
    <property type="match status" value="1"/>
</dbReference>
<dbReference type="FunFam" id="1.10.600.10:FF:000007">
    <property type="entry name" value="Isoprene synthase, chloroplastic"/>
    <property type="match status" value="1"/>
</dbReference>
<dbReference type="FunFam" id="1.50.10.130:FF:000001">
    <property type="entry name" value="Isoprene synthase, chloroplastic"/>
    <property type="match status" value="1"/>
</dbReference>
<dbReference type="Gene3D" id="1.10.600.10">
    <property type="entry name" value="Farnesyl Diphosphate Synthase"/>
    <property type="match status" value="1"/>
</dbReference>
<dbReference type="Gene3D" id="1.50.10.130">
    <property type="entry name" value="Terpene synthase, N-terminal domain"/>
    <property type="match status" value="1"/>
</dbReference>
<dbReference type="InterPro" id="IPR008949">
    <property type="entry name" value="Isoprenoid_synthase_dom_sf"/>
</dbReference>
<dbReference type="InterPro" id="IPR044814">
    <property type="entry name" value="Terpene_cyclase_plant_C1"/>
</dbReference>
<dbReference type="InterPro" id="IPR001906">
    <property type="entry name" value="Terpene_synth_N"/>
</dbReference>
<dbReference type="InterPro" id="IPR036965">
    <property type="entry name" value="Terpene_synth_N_sf"/>
</dbReference>
<dbReference type="InterPro" id="IPR050148">
    <property type="entry name" value="Terpene_synthase-like"/>
</dbReference>
<dbReference type="InterPro" id="IPR005630">
    <property type="entry name" value="Terpene_synthase_metal-bd"/>
</dbReference>
<dbReference type="InterPro" id="IPR008930">
    <property type="entry name" value="Terpenoid_cyclase/PrenylTrfase"/>
</dbReference>
<dbReference type="PANTHER" id="PTHR31225">
    <property type="entry name" value="OS04G0344100 PROTEIN-RELATED"/>
    <property type="match status" value="1"/>
</dbReference>
<dbReference type="PANTHER" id="PTHR31225:SF9">
    <property type="entry name" value="TERPENE SYNTHASE 10"/>
    <property type="match status" value="1"/>
</dbReference>
<dbReference type="Pfam" id="PF01397">
    <property type="entry name" value="Terpene_synth"/>
    <property type="match status" value="1"/>
</dbReference>
<dbReference type="Pfam" id="PF03936">
    <property type="entry name" value="Terpene_synth_C"/>
    <property type="match status" value="1"/>
</dbReference>
<dbReference type="SFLD" id="SFLDS00005">
    <property type="entry name" value="Isoprenoid_Synthase_Type_I"/>
    <property type="match status" value="1"/>
</dbReference>
<dbReference type="SFLD" id="SFLDG01604">
    <property type="entry name" value="Terpene_Cyclase_Like_1_C_Termi"/>
    <property type="match status" value="1"/>
</dbReference>
<dbReference type="SFLD" id="SFLDG01014">
    <property type="entry name" value="Terpene_Cyclase_Like_1_N-term"/>
    <property type="match status" value="1"/>
</dbReference>
<dbReference type="SUPFAM" id="SSF48239">
    <property type="entry name" value="Terpenoid cyclases/Protein prenyltransferases"/>
    <property type="match status" value="1"/>
</dbReference>
<dbReference type="SUPFAM" id="SSF48576">
    <property type="entry name" value="Terpenoid synthases"/>
    <property type="match status" value="1"/>
</dbReference>
<sequence length="581" mass="68132">MPLNSLHNLERKPSKAWSTSCTAPAARLQASFSLQQEEPRQIRRSGDYQPSLWDFNYIQSLNTPYKEQRYVNRQAELIMQVRMLLKVKMEAIQQLELIDDLQYLGLSYFFPDEIKQILSSIHNEHRYFHNNDLYLTALGFRILRQHGFNVSEDVFDCFKTEKCSDFNANLAQDTKGMLQLYEASFLLREGEDTLELARRFSTRSLREKLDEDGDEIDEDLSSWIRHSLDLPLHWRIQGLEARWFLDAYARRPDMNPLIFKLAKLNFNIVQATYQEELKDVSRWWNSSCLAEKLPFVRDRIVECFFWAIGAFEPHQYSYQRKMAAIIITFVTIIDDVYDVYGTLEELELFTDMIRRWDNISISQLPYYMQVCYLALYNFVSERAYDILKDQHFNSIPYLQRSWVSLVEGYLKEAYWYYNGYKPSLEEYLNNAKISISAPTIISQLYFTLANSTDETVIESLYEYHNILYLSGTILRLADDLGTSQHELERGDVPKAIQCYMKDTNASEREAVEHVKFLIRETWKEMNTVTTASDCPFTDDLVAVATNLARAAQFIYLDGDGHGVQHSEIHQQMGGLLFQPYV</sequence>
<name>SABS1_SALPM</name>
<comment type="function">
    <text evidence="4">Monoterpene synthase (TPS) involved in the biosynthesis of monoterpene natural products, components of the chemical defense arsenal (PubMed:17557809). Catalyzes the conversion of (2E)-geranyl diphosphate (GPP) into sabinene, and, as minor products, myrcene (PubMed:17557809).</text>
</comment>
<comment type="catalytic activity">
    <reaction evidence="4">
        <text>(2E)-geranyl diphosphate = sabinene + diphosphate</text>
        <dbReference type="Rhea" id="RHEA:68636"/>
        <dbReference type="ChEBI" id="CHEBI:33019"/>
        <dbReference type="ChEBI" id="CHEBI:50027"/>
        <dbReference type="ChEBI" id="CHEBI:58057"/>
    </reaction>
    <physiologicalReaction direction="left-to-right" evidence="4">
        <dbReference type="Rhea" id="RHEA:68637"/>
    </physiologicalReaction>
</comment>
<comment type="catalytic activity">
    <reaction evidence="4">
        <text>(2E)-geranyl diphosphate = beta-myrcene + diphosphate</text>
        <dbReference type="Rhea" id="RHEA:16965"/>
        <dbReference type="ChEBI" id="CHEBI:17221"/>
        <dbReference type="ChEBI" id="CHEBI:33019"/>
        <dbReference type="ChEBI" id="CHEBI:58057"/>
        <dbReference type="EC" id="4.2.3.15"/>
    </reaction>
    <physiologicalReaction direction="left-to-right" evidence="4">
        <dbReference type="Rhea" id="RHEA:16966"/>
    </physiologicalReaction>
</comment>
<comment type="cofactor">
    <cofactor evidence="1">
        <name>Mg(2+)</name>
        <dbReference type="ChEBI" id="CHEBI:18420"/>
    </cofactor>
    <cofactor evidence="1">
        <name>Mn(2+)</name>
        <dbReference type="ChEBI" id="CHEBI:29035"/>
    </cofactor>
    <text evidence="1">Binds 3 Mg(2+) or Mn(2+) ions per subunit.</text>
</comment>
<comment type="pathway">
    <text evidence="4">Secondary metabolite biosynthesis; terpenoid biosynthesis.</text>
</comment>
<comment type="subcellular location">
    <subcellularLocation>
        <location evidence="3">Plastid</location>
        <location evidence="3">Chloroplast</location>
    </subcellularLocation>
</comment>
<comment type="domain">
    <text evidence="6">The Asp-Asp-Xaa-Xaa-Asp/Glu (DDXXD/E) motif is important for the catalytic activity, presumably through binding to Mg(2+).</text>
</comment>
<comment type="similarity">
    <text evidence="6">Belongs to the terpene synthase family. Tpsb subfamily.</text>
</comment>
<evidence type="ECO:0000250" key="1">
    <source>
        <dbReference type="UniProtKB" id="A0A1C9J6A7"/>
    </source>
</evidence>
<evidence type="ECO:0000250" key="2">
    <source>
        <dbReference type="UniProtKB" id="Q40577"/>
    </source>
</evidence>
<evidence type="ECO:0000255" key="3"/>
<evidence type="ECO:0000269" key="4">
    <source>
    </source>
</evidence>
<evidence type="ECO:0000303" key="5">
    <source>
    </source>
</evidence>
<evidence type="ECO:0000305" key="6"/>
<evidence type="ECO:0000312" key="7">
    <source>
        <dbReference type="EMBL" id="ABH07678.1"/>
    </source>
</evidence>
<reference key="1">
    <citation type="journal article" date="2007" name="Plant Cell">
        <title>Rational conversion of substrate and product specificity in a Salvia monoterpene synthase: structural insights into the evolution of terpene synthase function.</title>
        <authorList>
            <person name="Kampranis S.C."/>
            <person name="Ioannidis D."/>
            <person name="Purvis A."/>
            <person name="Mahrez W."/>
            <person name="Ninga E."/>
            <person name="Katerelos N.A."/>
            <person name="Anssour S."/>
            <person name="Dunwell J.M."/>
            <person name="Degenhardt J."/>
            <person name="Makris A.M."/>
            <person name="Goodenough P.W."/>
            <person name="Johnson C.B."/>
        </authorList>
    </citation>
    <scope>NUCLEOTIDE SEQUENCE [MRNA]</scope>
    <scope>FUNCTION</scope>
    <scope>MUTAGENESIS OF ILE-327; THR-328 AND SER-436</scope>
    <scope>CATALYTIC ACTIVITY</scope>
    <scope>PATHWAY</scope>
    <scope>SITE</scope>
</reference>
<protein>
    <recommendedName>
        <fullName evidence="5">Sabinene synthase 1, chloroplastic</fullName>
        <shortName evidence="5">Sp-SabS1</shortName>
        <ecNumber evidence="4">4.2.3.-</ecNumber>
    </recommendedName>
    <alternativeName>
        <fullName evidence="5">Myrcene synthase</fullName>
        <ecNumber evidence="4">4.2.3.15</ecNumber>
    </alternativeName>
</protein>
<gene>
    <name evidence="5" type="primary">SabS1</name>
</gene>
<accession>A6XH06</accession>
<keyword id="KW-0150">Chloroplast</keyword>
<keyword id="KW-0456">Lyase</keyword>
<keyword id="KW-0460">Magnesium</keyword>
<keyword id="KW-0479">Metal-binding</keyword>
<keyword id="KW-0934">Plastid</keyword>
<keyword id="KW-0809">Transit peptide</keyword>